<organism>
    <name type="scientific">Sodalis glossinidius (strain morsitans)</name>
    <dbReference type="NCBI Taxonomy" id="343509"/>
    <lineage>
        <taxon>Bacteria</taxon>
        <taxon>Pseudomonadati</taxon>
        <taxon>Pseudomonadota</taxon>
        <taxon>Gammaproteobacteria</taxon>
        <taxon>Enterobacterales</taxon>
        <taxon>Bruguierivoracaceae</taxon>
        <taxon>Sodalis</taxon>
    </lineage>
</organism>
<reference key="1">
    <citation type="journal article" date="2006" name="Genome Res.">
        <title>Massive genome erosion and functional adaptations provide insights into the symbiotic lifestyle of Sodalis glossinidius in the tsetse host.</title>
        <authorList>
            <person name="Toh H."/>
            <person name="Weiss B.L."/>
            <person name="Perkin S.A.H."/>
            <person name="Yamashita A."/>
            <person name="Oshima K."/>
            <person name="Hattori M."/>
            <person name="Aksoy S."/>
        </authorList>
    </citation>
    <scope>NUCLEOTIDE SEQUENCE [LARGE SCALE GENOMIC DNA]</scope>
    <source>
        <strain>morsitans</strain>
    </source>
</reference>
<dbReference type="EC" id="2.7.4.3" evidence="1"/>
<dbReference type="EMBL" id="AP008232">
    <property type="protein sequence ID" value="BAE73968.1"/>
    <property type="molecule type" value="Genomic_DNA"/>
</dbReference>
<dbReference type="RefSeq" id="WP_011410556.1">
    <property type="nucleotide sequence ID" value="NC_007712.1"/>
</dbReference>
<dbReference type="SMR" id="Q2NV57"/>
<dbReference type="STRING" id="343509.SG0693"/>
<dbReference type="KEGG" id="sgl:SG0693"/>
<dbReference type="eggNOG" id="COG0563">
    <property type="taxonomic scope" value="Bacteria"/>
</dbReference>
<dbReference type="HOGENOM" id="CLU_032354_1_2_6"/>
<dbReference type="OrthoDB" id="9805030at2"/>
<dbReference type="BioCyc" id="SGLO343509:SGP1_RS05895-MONOMER"/>
<dbReference type="UniPathway" id="UPA00588">
    <property type="reaction ID" value="UER00649"/>
</dbReference>
<dbReference type="Proteomes" id="UP000001932">
    <property type="component" value="Chromosome"/>
</dbReference>
<dbReference type="GO" id="GO:0005737">
    <property type="term" value="C:cytoplasm"/>
    <property type="evidence" value="ECO:0007669"/>
    <property type="project" value="UniProtKB-SubCell"/>
</dbReference>
<dbReference type="GO" id="GO:0004017">
    <property type="term" value="F:adenylate kinase activity"/>
    <property type="evidence" value="ECO:0007669"/>
    <property type="project" value="UniProtKB-UniRule"/>
</dbReference>
<dbReference type="GO" id="GO:0005524">
    <property type="term" value="F:ATP binding"/>
    <property type="evidence" value="ECO:0007669"/>
    <property type="project" value="UniProtKB-UniRule"/>
</dbReference>
<dbReference type="GO" id="GO:0044209">
    <property type="term" value="P:AMP salvage"/>
    <property type="evidence" value="ECO:0007669"/>
    <property type="project" value="UniProtKB-UniRule"/>
</dbReference>
<dbReference type="CDD" id="cd01428">
    <property type="entry name" value="ADK"/>
    <property type="match status" value="1"/>
</dbReference>
<dbReference type="FunFam" id="3.40.50.300:FF:000106">
    <property type="entry name" value="Adenylate kinase mitochondrial"/>
    <property type="match status" value="1"/>
</dbReference>
<dbReference type="Gene3D" id="3.40.50.300">
    <property type="entry name" value="P-loop containing nucleotide triphosphate hydrolases"/>
    <property type="match status" value="1"/>
</dbReference>
<dbReference type="HAMAP" id="MF_00235">
    <property type="entry name" value="Adenylate_kinase_Adk"/>
    <property type="match status" value="1"/>
</dbReference>
<dbReference type="InterPro" id="IPR006259">
    <property type="entry name" value="Adenyl_kin_sub"/>
</dbReference>
<dbReference type="InterPro" id="IPR000850">
    <property type="entry name" value="Adenylat/UMP-CMP_kin"/>
</dbReference>
<dbReference type="InterPro" id="IPR033690">
    <property type="entry name" value="Adenylat_kinase_CS"/>
</dbReference>
<dbReference type="InterPro" id="IPR007862">
    <property type="entry name" value="Adenylate_kinase_lid-dom"/>
</dbReference>
<dbReference type="InterPro" id="IPR027417">
    <property type="entry name" value="P-loop_NTPase"/>
</dbReference>
<dbReference type="NCBIfam" id="TIGR01351">
    <property type="entry name" value="adk"/>
    <property type="match status" value="1"/>
</dbReference>
<dbReference type="NCBIfam" id="NF001379">
    <property type="entry name" value="PRK00279.1-1"/>
    <property type="match status" value="1"/>
</dbReference>
<dbReference type="NCBIfam" id="NF001380">
    <property type="entry name" value="PRK00279.1-2"/>
    <property type="match status" value="1"/>
</dbReference>
<dbReference type="NCBIfam" id="NF001381">
    <property type="entry name" value="PRK00279.1-3"/>
    <property type="match status" value="1"/>
</dbReference>
<dbReference type="PANTHER" id="PTHR23359">
    <property type="entry name" value="NUCLEOTIDE KINASE"/>
    <property type="match status" value="1"/>
</dbReference>
<dbReference type="Pfam" id="PF00406">
    <property type="entry name" value="ADK"/>
    <property type="match status" value="1"/>
</dbReference>
<dbReference type="Pfam" id="PF05191">
    <property type="entry name" value="ADK_lid"/>
    <property type="match status" value="1"/>
</dbReference>
<dbReference type="PRINTS" id="PR00094">
    <property type="entry name" value="ADENYLTKNASE"/>
</dbReference>
<dbReference type="SUPFAM" id="SSF52540">
    <property type="entry name" value="P-loop containing nucleoside triphosphate hydrolases"/>
    <property type="match status" value="1"/>
</dbReference>
<dbReference type="PROSITE" id="PS00113">
    <property type="entry name" value="ADENYLATE_KINASE"/>
    <property type="match status" value="1"/>
</dbReference>
<sequence>MRIILLGAPGAGKGTQAQFIMEKYGIPQISTGDMLRAAVKAQSELGRQAKALMDAGKLVTDELVIALAKERIKQDHCRNGFLLDGFPRTLPQADAMKEVGIAVDYVLEFAVPDSLIIDRIVGRRVHAPSGRVYHVKFNPPKQEGKDDVTGELLTSRKDDQEDTVRKRLVEYHQQTAPLIDYYRKEADAGNTRYFTLDGTRNVSEVSAELAAILG</sequence>
<accession>Q2NV57</accession>
<gene>
    <name evidence="1" type="primary">adk</name>
    <name type="ordered locus">SG0693</name>
</gene>
<keyword id="KW-0067">ATP-binding</keyword>
<keyword id="KW-0963">Cytoplasm</keyword>
<keyword id="KW-0418">Kinase</keyword>
<keyword id="KW-0545">Nucleotide biosynthesis</keyword>
<keyword id="KW-0547">Nucleotide-binding</keyword>
<keyword id="KW-0808">Transferase</keyword>
<comment type="function">
    <text evidence="1">Catalyzes the reversible transfer of the terminal phosphate group between ATP and AMP. Plays an important role in cellular energy homeostasis and in adenine nucleotide metabolism.</text>
</comment>
<comment type="catalytic activity">
    <reaction evidence="1">
        <text>AMP + ATP = 2 ADP</text>
        <dbReference type="Rhea" id="RHEA:12973"/>
        <dbReference type="ChEBI" id="CHEBI:30616"/>
        <dbReference type="ChEBI" id="CHEBI:456215"/>
        <dbReference type="ChEBI" id="CHEBI:456216"/>
        <dbReference type="EC" id="2.7.4.3"/>
    </reaction>
</comment>
<comment type="pathway">
    <text evidence="1">Purine metabolism; AMP biosynthesis via salvage pathway; AMP from ADP: step 1/1.</text>
</comment>
<comment type="subunit">
    <text evidence="1">Monomer.</text>
</comment>
<comment type="subcellular location">
    <subcellularLocation>
        <location evidence="1">Cytoplasm</location>
    </subcellularLocation>
</comment>
<comment type="domain">
    <text evidence="1">Consists of three domains, a large central CORE domain and two small peripheral domains, NMPbind and LID, which undergo movements during catalysis. The LID domain closes over the site of phosphoryl transfer upon ATP binding. Assembling and dissambling the active center during each catalytic cycle provides an effective means to prevent ATP hydrolysis.</text>
</comment>
<comment type="similarity">
    <text evidence="1">Belongs to the adenylate kinase family.</text>
</comment>
<protein>
    <recommendedName>
        <fullName evidence="1">Adenylate kinase</fullName>
        <shortName evidence="1">AK</shortName>
        <ecNumber evidence="1">2.7.4.3</ecNumber>
    </recommendedName>
    <alternativeName>
        <fullName evidence="1">ATP-AMP transphosphorylase</fullName>
    </alternativeName>
    <alternativeName>
        <fullName evidence="1">ATP:AMP phosphotransferase</fullName>
    </alternativeName>
    <alternativeName>
        <fullName evidence="1">Adenylate monophosphate kinase</fullName>
    </alternativeName>
</protein>
<feature type="chain" id="PRO_1000058910" description="Adenylate kinase">
    <location>
        <begin position="1"/>
        <end position="214"/>
    </location>
</feature>
<feature type="region of interest" description="NMP" evidence="1">
    <location>
        <begin position="30"/>
        <end position="59"/>
    </location>
</feature>
<feature type="region of interest" description="LID">
    <location>
        <begin position="122"/>
        <end position="159"/>
    </location>
</feature>
<feature type="binding site" evidence="1">
    <location>
        <begin position="10"/>
        <end position="15"/>
    </location>
    <ligand>
        <name>ATP</name>
        <dbReference type="ChEBI" id="CHEBI:30616"/>
    </ligand>
</feature>
<feature type="binding site" evidence="1">
    <location>
        <position position="31"/>
    </location>
    <ligand>
        <name>AMP</name>
        <dbReference type="ChEBI" id="CHEBI:456215"/>
    </ligand>
</feature>
<feature type="binding site" evidence="1">
    <location>
        <position position="36"/>
    </location>
    <ligand>
        <name>AMP</name>
        <dbReference type="ChEBI" id="CHEBI:456215"/>
    </ligand>
</feature>
<feature type="binding site" evidence="1">
    <location>
        <begin position="57"/>
        <end position="59"/>
    </location>
    <ligand>
        <name>AMP</name>
        <dbReference type="ChEBI" id="CHEBI:456215"/>
    </ligand>
</feature>
<feature type="binding site" evidence="1">
    <location>
        <begin position="85"/>
        <end position="88"/>
    </location>
    <ligand>
        <name>AMP</name>
        <dbReference type="ChEBI" id="CHEBI:456215"/>
    </ligand>
</feature>
<feature type="binding site" evidence="1">
    <location>
        <position position="92"/>
    </location>
    <ligand>
        <name>AMP</name>
        <dbReference type="ChEBI" id="CHEBI:456215"/>
    </ligand>
</feature>
<feature type="binding site" evidence="1">
    <location>
        <position position="123"/>
    </location>
    <ligand>
        <name>ATP</name>
        <dbReference type="ChEBI" id="CHEBI:30616"/>
    </ligand>
</feature>
<feature type="binding site" evidence="1">
    <location>
        <begin position="132"/>
        <end position="133"/>
    </location>
    <ligand>
        <name>ATP</name>
        <dbReference type="ChEBI" id="CHEBI:30616"/>
    </ligand>
</feature>
<feature type="binding site" evidence="1">
    <location>
        <position position="156"/>
    </location>
    <ligand>
        <name>AMP</name>
        <dbReference type="ChEBI" id="CHEBI:456215"/>
    </ligand>
</feature>
<feature type="binding site" evidence="1">
    <location>
        <position position="167"/>
    </location>
    <ligand>
        <name>AMP</name>
        <dbReference type="ChEBI" id="CHEBI:456215"/>
    </ligand>
</feature>
<feature type="binding site" evidence="1">
    <location>
        <position position="200"/>
    </location>
    <ligand>
        <name>ATP</name>
        <dbReference type="ChEBI" id="CHEBI:30616"/>
    </ligand>
</feature>
<name>KAD_SODGM</name>
<proteinExistence type="inferred from homology"/>
<evidence type="ECO:0000255" key="1">
    <source>
        <dbReference type="HAMAP-Rule" id="MF_00235"/>
    </source>
</evidence>